<keyword id="KW-0066">ATP synthesis</keyword>
<keyword id="KW-0997">Cell inner membrane</keyword>
<keyword id="KW-1003">Cell membrane</keyword>
<keyword id="KW-0139">CF(1)</keyword>
<keyword id="KW-0375">Hydrogen ion transport</keyword>
<keyword id="KW-0406">Ion transport</keyword>
<keyword id="KW-0472">Membrane</keyword>
<keyword id="KW-0813">Transport</keyword>
<proteinExistence type="inferred from homology"/>
<reference key="1">
    <citation type="journal article" date="2005" name="Proc. Natl. Acad. Sci. U.S.A.">
        <title>Complete genome sequencing of Anaplasma marginale reveals that the surface is skewed to two superfamilies of outer membrane proteins.</title>
        <authorList>
            <person name="Brayton K.A."/>
            <person name="Kappmeyer L.S."/>
            <person name="Herndon D.R."/>
            <person name="Dark M.J."/>
            <person name="Tibbals D.L."/>
            <person name="Palmer G.H."/>
            <person name="McGuire T.C."/>
            <person name="Knowles D.P. Jr."/>
        </authorList>
    </citation>
    <scope>NUCLEOTIDE SEQUENCE [LARGE SCALE GENOMIC DNA]</scope>
    <source>
        <strain>St. Maries</strain>
    </source>
</reference>
<feature type="chain" id="PRO_0000382053" description="ATP synthase subunit delta">
    <location>
        <begin position="1"/>
        <end position="190"/>
    </location>
</feature>
<dbReference type="EMBL" id="CP000030">
    <property type="protein sequence ID" value="AAV87007.1"/>
    <property type="molecule type" value="Genomic_DNA"/>
</dbReference>
<dbReference type="RefSeq" id="WP_010266221.1">
    <property type="nucleotide sequence ID" value="NZ_AFMU01000038.1"/>
</dbReference>
<dbReference type="SMR" id="Q5P9M3"/>
<dbReference type="GeneID" id="7398736"/>
<dbReference type="KEGG" id="ama:AM1175"/>
<dbReference type="PATRIC" id="fig|320483.3.peg.1020"/>
<dbReference type="HOGENOM" id="CLU_085114_1_1_5"/>
<dbReference type="GO" id="GO:0005886">
    <property type="term" value="C:plasma membrane"/>
    <property type="evidence" value="ECO:0007669"/>
    <property type="project" value="UniProtKB-SubCell"/>
</dbReference>
<dbReference type="GO" id="GO:0045259">
    <property type="term" value="C:proton-transporting ATP synthase complex"/>
    <property type="evidence" value="ECO:0007669"/>
    <property type="project" value="UniProtKB-KW"/>
</dbReference>
<dbReference type="GO" id="GO:0046933">
    <property type="term" value="F:proton-transporting ATP synthase activity, rotational mechanism"/>
    <property type="evidence" value="ECO:0007669"/>
    <property type="project" value="UniProtKB-UniRule"/>
</dbReference>
<dbReference type="Gene3D" id="1.10.520.20">
    <property type="entry name" value="N-terminal domain of the delta subunit of the F1F0-ATP synthase"/>
    <property type="match status" value="1"/>
</dbReference>
<dbReference type="HAMAP" id="MF_01416">
    <property type="entry name" value="ATP_synth_delta_bact"/>
    <property type="match status" value="1"/>
</dbReference>
<dbReference type="InterPro" id="IPR026015">
    <property type="entry name" value="ATP_synth_OSCP/delta_N_sf"/>
</dbReference>
<dbReference type="InterPro" id="IPR000711">
    <property type="entry name" value="ATPase_OSCP/dsu"/>
</dbReference>
<dbReference type="NCBIfam" id="TIGR01145">
    <property type="entry name" value="ATP_synt_delta"/>
    <property type="match status" value="1"/>
</dbReference>
<dbReference type="PANTHER" id="PTHR11910">
    <property type="entry name" value="ATP SYNTHASE DELTA CHAIN"/>
    <property type="match status" value="1"/>
</dbReference>
<dbReference type="Pfam" id="PF00213">
    <property type="entry name" value="OSCP"/>
    <property type="match status" value="1"/>
</dbReference>
<dbReference type="PRINTS" id="PR00125">
    <property type="entry name" value="ATPASEDELTA"/>
</dbReference>
<dbReference type="SUPFAM" id="SSF47928">
    <property type="entry name" value="N-terminal domain of the delta subunit of the F1F0-ATP synthase"/>
    <property type="match status" value="1"/>
</dbReference>
<name>ATPD_ANAMM</name>
<evidence type="ECO:0000255" key="1">
    <source>
        <dbReference type="HAMAP-Rule" id="MF_01416"/>
    </source>
</evidence>
<gene>
    <name evidence="1" type="primary">atpH</name>
    <name type="ordered locus">AM1175</name>
</gene>
<organism>
    <name type="scientific">Anaplasma marginale (strain St. Maries)</name>
    <dbReference type="NCBI Taxonomy" id="234826"/>
    <lineage>
        <taxon>Bacteria</taxon>
        <taxon>Pseudomonadati</taxon>
        <taxon>Pseudomonadota</taxon>
        <taxon>Alphaproteobacteria</taxon>
        <taxon>Rickettsiales</taxon>
        <taxon>Anaplasmataceae</taxon>
        <taxon>Anaplasma</taxon>
    </lineage>
</organism>
<protein>
    <recommendedName>
        <fullName evidence="1">ATP synthase subunit delta</fullName>
    </recommendedName>
    <alternativeName>
        <fullName evidence="1">ATP synthase F(1) sector subunit delta</fullName>
    </alternativeName>
    <alternativeName>
        <fullName evidence="1">F-type ATPase subunit delta</fullName>
        <shortName evidence="1">F-ATPase subunit delta</shortName>
    </alternativeName>
</protein>
<sequence>MFLDVVRKHGNGRVAYCYARALLDIVVDSADSICEEIKLVRAALTADGEVRAFFANPVTPKENKIAVLQALGKSCKLSRTLVGFVCVVVKDGKFGLLSDMFEEFFVLLMHARGQFALEITTASPVSAAEEKRILSIVKSEYGEPATVTKRVDPAILGGFIAKADSLVIDASFAGHLRELERVSRSVVCGV</sequence>
<comment type="function">
    <text evidence="1">F(1)F(0) ATP synthase produces ATP from ADP in the presence of a proton or sodium gradient. F-type ATPases consist of two structural domains, F(1) containing the extramembraneous catalytic core and F(0) containing the membrane proton channel, linked together by a central stalk and a peripheral stalk. During catalysis, ATP synthesis in the catalytic domain of F(1) is coupled via a rotary mechanism of the central stalk subunits to proton translocation.</text>
</comment>
<comment type="function">
    <text evidence="1">This protein is part of the stalk that links CF(0) to CF(1). It either transmits conformational changes from CF(0) to CF(1) or is implicated in proton conduction.</text>
</comment>
<comment type="subunit">
    <text evidence="1">F-type ATPases have 2 components, F(1) - the catalytic core - and F(0) - the membrane proton channel. F(1) has five subunits: alpha(3), beta(3), gamma(1), delta(1), epsilon(1). F(0) has three main subunits: a(1), b(2) and c(10-14). The alpha and beta chains form an alternating ring which encloses part of the gamma chain. F(1) is attached to F(0) by a central stalk formed by the gamma and epsilon chains, while a peripheral stalk is formed by the delta and b chains.</text>
</comment>
<comment type="subcellular location">
    <subcellularLocation>
        <location evidence="1">Cell inner membrane</location>
        <topology evidence="1">Peripheral membrane protein</topology>
    </subcellularLocation>
</comment>
<comment type="similarity">
    <text evidence="1">Belongs to the ATPase delta chain family.</text>
</comment>
<accession>Q5P9M3</accession>